<organism>
    <name type="scientific">Saccharomyces cerevisiae (strain ATCC 204508 / S288c)</name>
    <name type="common">Baker's yeast</name>
    <dbReference type="NCBI Taxonomy" id="559292"/>
    <lineage>
        <taxon>Eukaryota</taxon>
        <taxon>Fungi</taxon>
        <taxon>Dikarya</taxon>
        <taxon>Ascomycota</taxon>
        <taxon>Saccharomycotina</taxon>
        <taxon>Saccharomycetes</taxon>
        <taxon>Saccharomycetales</taxon>
        <taxon>Saccharomycetaceae</taxon>
        <taxon>Saccharomyces</taxon>
    </lineage>
</organism>
<evidence type="ECO:0000250" key="1"/>
<evidence type="ECO:0000256" key="2">
    <source>
        <dbReference type="SAM" id="MobiDB-lite"/>
    </source>
</evidence>
<evidence type="ECO:0000269" key="3">
    <source>
    </source>
</evidence>
<evidence type="ECO:0000269" key="4">
    <source>
    </source>
</evidence>
<evidence type="ECO:0000269" key="5">
    <source>
    </source>
</evidence>
<evidence type="ECO:0000269" key="6">
    <source>
    </source>
</evidence>
<evidence type="ECO:0000269" key="7">
    <source>
    </source>
</evidence>
<evidence type="ECO:0000305" key="8"/>
<evidence type="ECO:0007744" key="9">
    <source>
    </source>
</evidence>
<evidence type="ECO:0007744" key="10">
    <source>
    </source>
</evidence>
<dbReference type="EMBL" id="X76174">
    <property type="protein sequence ID" value="CAA53770.1"/>
    <property type="molecule type" value="Genomic_DNA"/>
</dbReference>
<dbReference type="EMBL" id="Z28239">
    <property type="protein sequence ID" value="CAA82086.1"/>
    <property type="molecule type" value="Genomic_DNA"/>
</dbReference>
<dbReference type="EMBL" id="BK006944">
    <property type="protein sequence ID" value="DAA09169.1"/>
    <property type="molecule type" value="Genomic_DNA"/>
</dbReference>
<dbReference type="PIR" id="S38083">
    <property type="entry name" value="S38083"/>
</dbReference>
<dbReference type="RefSeq" id="NP_012939.1">
    <property type="nucleotide sequence ID" value="NM_001179804.1"/>
</dbReference>
<dbReference type="SMR" id="P36018"/>
<dbReference type="BioGRID" id="34146">
    <property type="interactions" value="129"/>
</dbReference>
<dbReference type="DIP" id="DIP-2121N"/>
<dbReference type="FunCoup" id="P36018">
    <property type="interactions" value="406"/>
</dbReference>
<dbReference type="IntAct" id="P36018">
    <property type="interactions" value="20"/>
</dbReference>
<dbReference type="MINT" id="P36018"/>
<dbReference type="STRING" id="4932.YKR014C"/>
<dbReference type="iPTMnet" id="P36018"/>
<dbReference type="PaxDb" id="4932-YKR014C"/>
<dbReference type="PeptideAtlas" id="P36018"/>
<dbReference type="EnsemblFungi" id="YKR014C_mRNA">
    <property type="protein sequence ID" value="YKR014C"/>
    <property type="gene ID" value="YKR014C"/>
</dbReference>
<dbReference type="GeneID" id="853884"/>
<dbReference type="KEGG" id="sce:YKR014C"/>
<dbReference type="AGR" id="SGD:S000001722"/>
<dbReference type="SGD" id="S000001722">
    <property type="gene designation" value="YPT52"/>
</dbReference>
<dbReference type="VEuPathDB" id="FungiDB:YKR014C"/>
<dbReference type="eggNOG" id="KOG0092">
    <property type="taxonomic scope" value="Eukaryota"/>
</dbReference>
<dbReference type="GeneTree" id="ENSGT00940000176536"/>
<dbReference type="HOGENOM" id="CLU_041217_10_2_1"/>
<dbReference type="InParanoid" id="P36018"/>
<dbReference type="OMA" id="DEEGLMW"/>
<dbReference type="OrthoDB" id="63533at2759"/>
<dbReference type="BioCyc" id="YEAST:G3O-31990-MONOMER"/>
<dbReference type="Reactome" id="R-SCE-6798695">
    <property type="pathway name" value="Neutrophil degranulation"/>
</dbReference>
<dbReference type="Reactome" id="R-SCE-8873719">
    <property type="pathway name" value="RAB geranylgeranylation"/>
</dbReference>
<dbReference type="Reactome" id="R-SCE-8876198">
    <property type="pathway name" value="RAB GEFs exchange GTP for GDP on RABs"/>
</dbReference>
<dbReference type="Reactome" id="R-SCE-983231">
    <property type="pathway name" value="Factors involved in megakaryocyte development and platelet production"/>
</dbReference>
<dbReference type="BioGRID-ORCS" id="853884">
    <property type="hits" value="0 hits in 10 CRISPR screens"/>
</dbReference>
<dbReference type="PRO" id="PR:P36018"/>
<dbReference type="Proteomes" id="UP000002311">
    <property type="component" value="Chromosome XI"/>
</dbReference>
<dbReference type="RNAct" id="P36018">
    <property type="molecule type" value="protein"/>
</dbReference>
<dbReference type="GO" id="GO:0005829">
    <property type="term" value="C:cytosol"/>
    <property type="evidence" value="ECO:0007669"/>
    <property type="project" value="GOC"/>
</dbReference>
<dbReference type="GO" id="GO:0012505">
    <property type="term" value="C:endomembrane system"/>
    <property type="evidence" value="ECO:0000318"/>
    <property type="project" value="GO_Central"/>
</dbReference>
<dbReference type="GO" id="GO:0005783">
    <property type="term" value="C:endoplasmic reticulum"/>
    <property type="evidence" value="ECO:0007669"/>
    <property type="project" value="UniProtKB-SubCell"/>
</dbReference>
<dbReference type="GO" id="GO:0000329">
    <property type="term" value="C:fungal-type vacuole membrane"/>
    <property type="evidence" value="ECO:0007005"/>
    <property type="project" value="SGD"/>
</dbReference>
<dbReference type="GO" id="GO:0005770">
    <property type="term" value="C:late endosome"/>
    <property type="evidence" value="ECO:0000315"/>
    <property type="project" value="SGD"/>
</dbReference>
<dbReference type="GO" id="GO:0005886">
    <property type="term" value="C:plasma membrane"/>
    <property type="evidence" value="ECO:0007669"/>
    <property type="project" value="UniProtKB-SubCell"/>
</dbReference>
<dbReference type="GO" id="GO:0005525">
    <property type="term" value="F:GTP binding"/>
    <property type="evidence" value="ECO:0007669"/>
    <property type="project" value="UniProtKB-KW"/>
</dbReference>
<dbReference type="GO" id="GO:0003924">
    <property type="term" value="F:GTPase activity"/>
    <property type="evidence" value="ECO:0000314"/>
    <property type="project" value="SGD"/>
</dbReference>
<dbReference type="GO" id="GO:0006897">
    <property type="term" value="P:endocytosis"/>
    <property type="evidence" value="ECO:0000315"/>
    <property type="project" value="SGD"/>
</dbReference>
<dbReference type="GO" id="GO:0006895">
    <property type="term" value="P:Golgi to endosome transport"/>
    <property type="evidence" value="ECO:0000315"/>
    <property type="project" value="SGD"/>
</dbReference>
<dbReference type="GO" id="GO:0006886">
    <property type="term" value="P:intracellular protein transport"/>
    <property type="evidence" value="ECO:0000318"/>
    <property type="project" value="GO_Central"/>
</dbReference>
<dbReference type="GO" id="GO:0032511">
    <property type="term" value="P:late endosome to vacuole transport via multivesicular body sorting pathway"/>
    <property type="evidence" value="ECO:0000316"/>
    <property type="project" value="SGD"/>
</dbReference>
<dbReference type="GO" id="GO:0036258">
    <property type="term" value="P:multivesicular body assembly"/>
    <property type="evidence" value="ECO:0000316"/>
    <property type="project" value="SGD"/>
</dbReference>
<dbReference type="GO" id="GO:0036010">
    <property type="term" value="P:protein localization to endosome"/>
    <property type="evidence" value="ECO:0000316"/>
    <property type="project" value="SGD"/>
</dbReference>
<dbReference type="GO" id="GO:0006623">
    <property type="term" value="P:protein targeting to vacuole"/>
    <property type="evidence" value="ECO:0000315"/>
    <property type="project" value="SGD"/>
</dbReference>
<dbReference type="CDD" id="cd01860">
    <property type="entry name" value="Rab5_related"/>
    <property type="match status" value="1"/>
</dbReference>
<dbReference type="FunFam" id="3.40.50.300:FF:000464">
    <property type="entry name" value="GTP-binding protein ypt5"/>
    <property type="match status" value="1"/>
</dbReference>
<dbReference type="Gene3D" id="3.40.50.300">
    <property type="entry name" value="P-loop containing nucleotide triphosphate hydrolases"/>
    <property type="match status" value="1"/>
</dbReference>
<dbReference type="InterPro" id="IPR027417">
    <property type="entry name" value="P-loop_NTPase"/>
</dbReference>
<dbReference type="InterPro" id="IPR050227">
    <property type="entry name" value="Rab"/>
</dbReference>
<dbReference type="InterPro" id="IPR005225">
    <property type="entry name" value="Small_GTP-bd"/>
</dbReference>
<dbReference type="InterPro" id="IPR001806">
    <property type="entry name" value="Small_GTPase"/>
</dbReference>
<dbReference type="NCBIfam" id="TIGR00231">
    <property type="entry name" value="small_GTP"/>
    <property type="match status" value="1"/>
</dbReference>
<dbReference type="PANTHER" id="PTHR47977">
    <property type="entry name" value="RAS-RELATED PROTEIN RAB"/>
    <property type="match status" value="1"/>
</dbReference>
<dbReference type="Pfam" id="PF00071">
    <property type="entry name" value="Ras"/>
    <property type="match status" value="1"/>
</dbReference>
<dbReference type="PRINTS" id="PR00449">
    <property type="entry name" value="RASTRNSFRMNG"/>
</dbReference>
<dbReference type="SMART" id="SM00175">
    <property type="entry name" value="RAB"/>
    <property type="match status" value="1"/>
</dbReference>
<dbReference type="SMART" id="SM00176">
    <property type="entry name" value="RAN"/>
    <property type="match status" value="1"/>
</dbReference>
<dbReference type="SMART" id="SM00173">
    <property type="entry name" value="RAS"/>
    <property type="match status" value="1"/>
</dbReference>
<dbReference type="SMART" id="SM00174">
    <property type="entry name" value="RHO"/>
    <property type="match status" value="1"/>
</dbReference>
<dbReference type="SUPFAM" id="SSF52540">
    <property type="entry name" value="P-loop containing nucleoside triphosphate hydrolases"/>
    <property type="match status" value="1"/>
</dbReference>
<dbReference type="PROSITE" id="PS51419">
    <property type="entry name" value="RAB"/>
    <property type="match status" value="1"/>
</dbReference>
<protein>
    <recommendedName>
        <fullName>GTP-binding protein YPT52</fullName>
    </recommendedName>
</protein>
<feature type="chain" id="PRO_0000121326" description="GTP-binding protein YPT52">
    <location>
        <begin position="1"/>
        <end position="234"/>
    </location>
</feature>
<feature type="region of interest" description="Disordered" evidence="2">
    <location>
        <begin position="131"/>
        <end position="151"/>
    </location>
</feature>
<feature type="region of interest" description="Disordered" evidence="2">
    <location>
        <begin position="206"/>
        <end position="234"/>
    </location>
</feature>
<feature type="compositionally biased region" description="Polar residues" evidence="2">
    <location>
        <begin position="132"/>
        <end position="142"/>
    </location>
</feature>
<feature type="compositionally biased region" description="Polar residues" evidence="2">
    <location>
        <begin position="217"/>
        <end position="234"/>
    </location>
</feature>
<feature type="binding site" evidence="1">
    <location>
        <begin position="10"/>
        <end position="17"/>
    </location>
    <ligand>
        <name>GTP</name>
        <dbReference type="ChEBI" id="CHEBI:37565"/>
    </ligand>
</feature>
<feature type="binding site" evidence="1">
    <location>
        <begin position="66"/>
        <end position="70"/>
    </location>
    <ligand>
        <name>GTP</name>
        <dbReference type="ChEBI" id="CHEBI:37565"/>
    </ligand>
</feature>
<feature type="binding site" evidence="1">
    <location>
        <begin position="111"/>
        <end position="114"/>
    </location>
    <ligand>
        <name>GTP</name>
        <dbReference type="ChEBI" id="CHEBI:37565"/>
    </ligand>
</feature>
<feature type="modified residue" description="Phosphoserine" evidence="9">
    <location>
        <position position="139"/>
    </location>
</feature>
<feature type="modified residue" description="Phosphoserine" evidence="9">
    <location>
        <position position="142"/>
    </location>
</feature>
<feature type="lipid moiety-binding region" description="S-geranylgeranyl cysteine" evidence="1">
    <location>
        <position position="232"/>
    </location>
</feature>
<feature type="lipid moiety-binding region" description="S-geranylgeranyl cysteine" evidence="1">
    <location>
        <position position="233"/>
    </location>
</feature>
<feature type="cross-link" description="Glycyl lysine isopeptide (Lys-Gly) (interchain with G-Cter in ubiquitin)" evidence="10">
    <location>
        <position position="151"/>
    </location>
</feature>
<gene>
    <name type="primary">YPT52</name>
    <name type="ordered locus">YKR014C</name>
    <name type="ORF">YK112</name>
</gene>
<proteinExistence type="evidence at protein level"/>
<accession>P36018</accession>
<accession>D6VX79</accession>
<name>YPT52_YEAST</name>
<keyword id="KW-1003">Cell membrane</keyword>
<keyword id="KW-0903">Direct protein sequencing</keyword>
<keyword id="KW-0256">Endoplasmic reticulum</keyword>
<keyword id="KW-0342">GTP-binding</keyword>
<keyword id="KW-1017">Isopeptide bond</keyword>
<keyword id="KW-0449">Lipoprotein</keyword>
<keyword id="KW-0472">Membrane</keyword>
<keyword id="KW-0547">Nucleotide-binding</keyword>
<keyword id="KW-0597">Phosphoprotein</keyword>
<keyword id="KW-0636">Prenylation</keyword>
<keyword id="KW-0653">Protein transport</keyword>
<keyword id="KW-1185">Reference proteome</keyword>
<keyword id="KW-0813">Transport</keyword>
<keyword id="KW-0832">Ubl conjugation</keyword>
<comment type="function">
    <text evidence="6 7">Required for transport in the endocytic pathway and for correct sorting of the vacuolar hydrolases suggesting a possible intersection of the endocytic with the vacuolar sorting pathway (PubMed:21389113). May be involved in recruiting the MON1-CCZ1 complex to membranes enriched in phosphatidylinositol 3-phosphate (PtdIns[3]P) or other charged lipids, leading to recruitment of YPT7 (PubMed:32391792).</text>
</comment>
<comment type="subunit">
    <text evidence="3 4 6">Interacts with ROY1, YIF1, YIP3, YIP4 and YIP5.</text>
</comment>
<comment type="interaction">
    <interactant intactId="EBI-29407">
        <id>P36018</id>
    </interactant>
    <interactant intactId="EBI-7517">
        <id>P39958</id>
        <label>GDI1</label>
    </interactant>
    <organismsDiffer>false</organismsDiffer>
    <experiments>4</experiments>
</comment>
<comment type="interaction">
    <interactant intactId="EBI-29407">
        <id>P36018</id>
    </interactant>
    <interactant intactId="EBI-14799">
        <id>P32864</id>
        <label>MRS6</label>
    </interactant>
    <organismsDiffer>false</organismsDiffer>
    <experiments>3</experiments>
</comment>
<comment type="interaction">
    <interactant intactId="EBI-29407">
        <id>P36018</id>
    </interactant>
    <interactant intactId="EBI-27556">
        <id>Q04847</id>
        <label>ROY1</label>
    </interactant>
    <organismsDiffer>false</organismsDiffer>
    <experiments>4</experiments>
</comment>
<comment type="interaction">
    <interactant intactId="EBI-29407">
        <id>P36018</id>
    </interactant>
    <interactant intactId="EBI-25301">
        <id>P53633</id>
        <label>YIP3</label>
    </interactant>
    <organismsDiffer>false</organismsDiffer>
    <experiments>2</experiments>
</comment>
<comment type="interaction">
    <interactant intactId="EBI-29407">
        <id>P36018</id>
    </interactant>
    <interactant intactId="EBI-24124">
        <id>P53093</id>
        <label>YIP4</label>
    </interactant>
    <organismsDiffer>false</organismsDiffer>
    <experiments>2</experiments>
</comment>
<comment type="subcellular location">
    <subcellularLocation>
        <location evidence="8">Cell membrane</location>
        <topology evidence="8">Lipid-anchor</topology>
        <orientation evidence="8">Cytoplasmic side</orientation>
    </subcellularLocation>
    <subcellularLocation>
        <location evidence="6">Endoplasmic reticulum</location>
    </subcellularLocation>
    <text>Also found in association with endoplasmic reticulum vesicles having SED5 on their surface.</text>
</comment>
<comment type="miscellaneous">
    <text evidence="5">Present with 9380 molecules/cell in log phase SD medium.</text>
</comment>
<comment type="similarity">
    <text evidence="8">Belongs to the small GTPase superfamily. Rab family.</text>
</comment>
<sequence length="234" mass="26132">MLQFKLVLLGDSSVGKSSIVHRFVKDTFDELRESTIGAAFLSQSITIHPNDGNETKDVVIKFEIWDTAGQERYKSLAPMYYRNANAALVVYDITQEDSLQKARNWVDELKNKVGDDDLVIYLLGNKVDLCQETPSTETSPDSNEGGDEEQKVRAISTEEAKQYAQEQGLLFREVSAKTGEGVKEIFQDIGEKLYDLKKDEILSKQNRQIGGGNNGQVDINLQRPSTNDPTSCCS</sequence>
<reference key="1">
    <citation type="journal article" date="1994" name="J. Cell Biol.">
        <title>Role of three rab5-like GTPases, Ypt51p, Ypt52p, and Ypt53p, in the endocytic and vacuolar protein sorting pathways of yeast.</title>
        <authorList>
            <person name="Singer-Krueger B."/>
            <person name="Stenmark H."/>
            <person name="Duesterhoeft A."/>
            <person name="Philippsen P."/>
            <person name="Yoo J.-S."/>
            <person name="Gallwitz D."/>
            <person name="Zerial M."/>
        </authorList>
    </citation>
    <scope>NUCLEOTIDE SEQUENCE [GENOMIC DNA]</scope>
</reference>
<reference key="2">
    <citation type="journal article" date="1994" name="Nature">
        <title>Complete DNA sequence of yeast chromosome XI.</title>
        <authorList>
            <person name="Dujon B."/>
            <person name="Alexandraki D."/>
            <person name="Andre B."/>
            <person name="Ansorge W."/>
            <person name="Baladron V."/>
            <person name="Ballesta J.P.G."/>
            <person name="Banrevi A."/>
            <person name="Bolle P.-A."/>
            <person name="Bolotin-Fukuhara M."/>
            <person name="Bossier P."/>
            <person name="Bou G."/>
            <person name="Boyer J."/>
            <person name="Buitrago M.J."/>
            <person name="Cheret G."/>
            <person name="Colleaux L."/>
            <person name="Daignan-Fornier B."/>
            <person name="del Rey F."/>
            <person name="Dion C."/>
            <person name="Domdey H."/>
            <person name="Duesterhoeft A."/>
            <person name="Duesterhus S."/>
            <person name="Entian K.-D."/>
            <person name="Erfle H."/>
            <person name="Esteban P.F."/>
            <person name="Feldmann H."/>
            <person name="Fernandes L."/>
            <person name="Fobo G.M."/>
            <person name="Fritz C."/>
            <person name="Fukuhara H."/>
            <person name="Gabel C."/>
            <person name="Gaillon L."/>
            <person name="Garcia-Cantalejo J.M."/>
            <person name="Garcia-Ramirez J.J."/>
            <person name="Gent M.E."/>
            <person name="Ghazvini M."/>
            <person name="Goffeau A."/>
            <person name="Gonzalez A."/>
            <person name="Grothues D."/>
            <person name="Guerreiro P."/>
            <person name="Hegemann J.H."/>
            <person name="Hewitt N."/>
            <person name="Hilger F."/>
            <person name="Hollenberg C.P."/>
            <person name="Horaitis O."/>
            <person name="Indge K.J."/>
            <person name="Jacquier A."/>
            <person name="James C.M."/>
            <person name="Jauniaux J.-C."/>
            <person name="Jimenez A."/>
            <person name="Keuchel H."/>
            <person name="Kirchrath L."/>
            <person name="Kleine K."/>
            <person name="Koetter P."/>
            <person name="Legrain P."/>
            <person name="Liebl S."/>
            <person name="Louis E.J."/>
            <person name="Maia e Silva A."/>
            <person name="Marck C."/>
            <person name="Monnier A.-L."/>
            <person name="Moestl D."/>
            <person name="Mueller S."/>
            <person name="Obermaier B."/>
            <person name="Oliver S.G."/>
            <person name="Pallier C."/>
            <person name="Pascolo S."/>
            <person name="Pfeiffer F."/>
            <person name="Philippsen P."/>
            <person name="Planta R.J."/>
            <person name="Pohl F.M."/>
            <person name="Pohl T.M."/>
            <person name="Poehlmann R."/>
            <person name="Portetelle D."/>
            <person name="Purnelle B."/>
            <person name="Puzos V."/>
            <person name="Ramezani Rad M."/>
            <person name="Rasmussen S.W."/>
            <person name="Remacha M.A."/>
            <person name="Revuelta J.L."/>
            <person name="Richard G.-F."/>
            <person name="Rieger M."/>
            <person name="Rodrigues-Pousada C."/>
            <person name="Rose M."/>
            <person name="Rupp T."/>
            <person name="Santos M.A."/>
            <person name="Schwager C."/>
            <person name="Sensen C."/>
            <person name="Skala J."/>
            <person name="Soares H."/>
            <person name="Sor F."/>
            <person name="Stegemann J."/>
            <person name="Tettelin H."/>
            <person name="Thierry A."/>
            <person name="Tzermia M."/>
            <person name="Urrestarazu L.A."/>
            <person name="van Dyck L."/>
            <person name="van Vliet-Reedijk J.C."/>
            <person name="Valens M."/>
            <person name="Vandenbol M."/>
            <person name="Vilela C."/>
            <person name="Vissers S."/>
            <person name="von Wettstein D."/>
            <person name="Voss H."/>
            <person name="Wiemann S."/>
            <person name="Xu G."/>
            <person name="Zimmermann J."/>
            <person name="Haasemann M."/>
            <person name="Becker I."/>
            <person name="Mewes H.-W."/>
        </authorList>
    </citation>
    <scope>NUCLEOTIDE SEQUENCE [LARGE SCALE GENOMIC DNA]</scope>
    <source>
        <strain>ATCC 204508 / S288c</strain>
    </source>
</reference>
<reference key="3">
    <citation type="journal article" date="2014" name="G3 (Bethesda)">
        <title>The reference genome sequence of Saccharomyces cerevisiae: Then and now.</title>
        <authorList>
            <person name="Engel S.R."/>
            <person name="Dietrich F.S."/>
            <person name="Fisk D.G."/>
            <person name="Binkley G."/>
            <person name="Balakrishnan R."/>
            <person name="Costanzo M.C."/>
            <person name="Dwight S.S."/>
            <person name="Hitz B.C."/>
            <person name="Karra K."/>
            <person name="Nash R.S."/>
            <person name="Weng S."/>
            <person name="Wong E.D."/>
            <person name="Lloyd P."/>
            <person name="Skrzypek M.S."/>
            <person name="Miyasato S.R."/>
            <person name="Simison M."/>
            <person name="Cherry J.M."/>
        </authorList>
    </citation>
    <scope>GENOME REANNOTATION</scope>
    <source>
        <strain>ATCC 204508 / S288c</strain>
    </source>
</reference>
<reference key="4">
    <citation type="journal article" date="2000" name="FEBS Lett.">
        <title>Proteins in the early Golgi compartment of Saccharomyces cerevisiae immunoisolated by Sed5p.</title>
        <authorList>
            <person name="Cho J.-H."/>
            <person name="Noda Y."/>
            <person name="Yoda K."/>
        </authorList>
    </citation>
    <scope>PROTEIN SEQUENCE OF 1-8</scope>
    <scope>ASSOCIATION WITH SED5 VESICLES</scope>
</reference>
<reference key="5">
    <citation type="journal article" date="2002" name="Biochem. Biophys. Res. Commun.">
        <title>Saccharomyces cerevisiae Pra1p/Yip3p interacts with Yip1p and Rab proteins.</title>
        <authorList>
            <person name="Calero M."/>
            <person name="Collins R.N."/>
        </authorList>
    </citation>
    <scope>INTERACTION WITH YIP3</scope>
</reference>
<reference key="6">
    <citation type="journal article" date="2002" name="FEBS Lett.">
        <title>Identification of the novel proteins Yip4p and Yip5p as Rab GTPase interacting factors.</title>
        <authorList>
            <person name="Calero M."/>
            <person name="Winand N.J."/>
            <person name="Collins R.N."/>
        </authorList>
    </citation>
    <scope>INTERACTION WITH YIF1; YIP4 AND YIP5</scope>
</reference>
<reference key="7">
    <citation type="journal article" date="2003" name="Nature">
        <title>Global analysis of protein expression in yeast.</title>
        <authorList>
            <person name="Ghaemmaghami S."/>
            <person name="Huh W.-K."/>
            <person name="Bower K."/>
            <person name="Howson R.W."/>
            <person name="Belle A."/>
            <person name="Dephoure N."/>
            <person name="O'Shea E.K."/>
            <person name="Weissman J.S."/>
        </authorList>
    </citation>
    <scope>LEVEL OF PROTEIN EXPRESSION [LARGE SCALE ANALYSIS]</scope>
</reference>
<reference key="8">
    <citation type="journal article" date="2009" name="Science">
        <title>Global analysis of Cdk1 substrate phosphorylation sites provides insights into evolution.</title>
        <authorList>
            <person name="Holt L.J."/>
            <person name="Tuch B.B."/>
            <person name="Villen J."/>
            <person name="Johnson A.D."/>
            <person name="Gygi S.P."/>
            <person name="Morgan D.O."/>
        </authorList>
    </citation>
    <scope>PHOSPHORYLATION [LARGE SCALE ANALYSIS] AT SER-139 AND SER-142</scope>
    <scope>IDENTIFICATION BY MASS SPECTROMETRY [LARGE SCALE ANALYSIS]</scope>
</reference>
<reference key="9">
    <citation type="journal article" date="2011" name="Mol. Biol. Cell">
        <title>Non-SCF-type F-box protein Roy1/Ymr258c interacts with a Rab5-like GTPase Ypt52 and inhibits Ypt52 function.</title>
        <authorList>
            <person name="Liu Y."/>
            <person name="Nakatsukasa K."/>
            <person name="Kotera M."/>
            <person name="Kanada A."/>
            <person name="Nishimura T."/>
            <person name="Kishi T."/>
            <person name="Mimura S."/>
            <person name="Kamura T."/>
        </authorList>
    </citation>
    <scope>FUNCTION</scope>
    <scope>SUBCELLULAR LOCATION</scope>
    <scope>INTERACTION WITH ROY1</scope>
</reference>
<reference key="10">
    <citation type="journal article" date="2012" name="Proteomics">
        <title>Sites of ubiquitin attachment in Saccharomyces cerevisiae.</title>
        <authorList>
            <person name="Starita L.M."/>
            <person name="Lo R.S."/>
            <person name="Eng J.K."/>
            <person name="von Haller P.D."/>
            <person name="Fields S."/>
        </authorList>
    </citation>
    <scope>UBIQUITINATION [LARGE SCALE ANALYSIS] AT LYS-151</scope>
    <scope>IDENTIFICATION BY MASS SPECTROMETRY [LARGE SCALE ANALYSIS]</scope>
</reference>
<reference key="11">
    <citation type="journal article" date="2020" name="Elife">
        <title>A conserved and regulated mechanism drives endosomal Rab transition.</title>
        <authorList>
            <person name="Langemeyer L."/>
            <person name="Borchers A.C."/>
            <person name="Herrmann E."/>
            <person name="Fuellbrunn N."/>
            <person name="Han Y."/>
            <person name="Perz A."/>
            <person name="Auffarth K."/>
            <person name="Kuemmel D."/>
            <person name="Ungermann C."/>
        </authorList>
    </citation>
    <scope>FUNCTION</scope>
</reference>